<protein>
    <recommendedName>
        <fullName>CDP-diacylglycerol--serine O-phosphatidyltransferase 1</fullName>
        <ecNumber>2.7.8.8</ecNumber>
    </recommendedName>
    <alternativeName>
        <fullName>Phosphatidylserine synthase 1</fullName>
    </alternativeName>
</protein>
<dbReference type="EC" id="2.7.8.8"/>
<dbReference type="EMBL" id="AC007591">
    <property type="protein sequence ID" value="AAD39639.1"/>
    <property type="status" value="ALT_SEQ"/>
    <property type="molecule type" value="Genomic_DNA"/>
</dbReference>
<dbReference type="EMBL" id="CP002684">
    <property type="protein sequence ID" value="AEE29265.1"/>
    <property type="molecule type" value="Genomic_DNA"/>
</dbReference>
<dbReference type="EMBL" id="CP002684">
    <property type="protein sequence ID" value="ANM60487.1"/>
    <property type="molecule type" value="Genomic_DNA"/>
</dbReference>
<dbReference type="EMBL" id="CP002684">
    <property type="protein sequence ID" value="ANM60488.1"/>
    <property type="molecule type" value="Genomic_DNA"/>
</dbReference>
<dbReference type="EMBL" id="BX813560">
    <property type="status" value="NOT_ANNOTATED_CDS"/>
    <property type="molecule type" value="mRNA"/>
</dbReference>
<dbReference type="PIR" id="G86284">
    <property type="entry name" value="G86284"/>
</dbReference>
<dbReference type="RefSeq" id="NP_001322771.1">
    <molecule id="F4HXY7-1"/>
    <property type="nucleotide sequence ID" value="NM_001332150.1"/>
</dbReference>
<dbReference type="RefSeq" id="NP_001322772.1">
    <molecule id="F4HXY7-1"/>
    <property type="nucleotide sequence ID" value="NM_001332149.1"/>
</dbReference>
<dbReference type="RefSeq" id="NP_172963.3">
    <molecule id="F4HXY7-1"/>
    <property type="nucleotide sequence ID" value="NM_101379.5"/>
</dbReference>
<dbReference type="SMR" id="F4HXY7"/>
<dbReference type="BioGRID" id="23314">
    <property type="interactions" value="3"/>
</dbReference>
<dbReference type="FunCoup" id="F4HXY7">
    <property type="interactions" value="1965"/>
</dbReference>
<dbReference type="STRING" id="3702.F4HXY7"/>
<dbReference type="PaxDb" id="3702-AT1G15110.2"/>
<dbReference type="ProteomicsDB" id="248815">
    <molecule id="F4HXY7-1"/>
</dbReference>
<dbReference type="EnsemblPlants" id="AT1G15110.1">
    <molecule id="F4HXY7-1"/>
    <property type="protein sequence ID" value="AT1G15110.1"/>
    <property type="gene ID" value="AT1G15110"/>
</dbReference>
<dbReference type="EnsemblPlants" id="AT1G15110.3">
    <molecule id="F4HXY7-1"/>
    <property type="protein sequence ID" value="AT1G15110.3"/>
    <property type="gene ID" value="AT1G15110"/>
</dbReference>
<dbReference type="EnsemblPlants" id="AT1G15110.4">
    <molecule id="F4HXY7-1"/>
    <property type="protein sequence ID" value="AT1G15110.4"/>
    <property type="gene ID" value="AT1G15110"/>
</dbReference>
<dbReference type="GeneID" id="838074"/>
<dbReference type="Gramene" id="AT1G15110.1">
    <molecule id="F4HXY7-1"/>
    <property type="protein sequence ID" value="AT1G15110.1"/>
    <property type="gene ID" value="AT1G15110"/>
</dbReference>
<dbReference type="Gramene" id="AT1G15110.3">
    <molecule id="F4HXY7-1"/>
    <property type="protein sequence ID" value="AT1G15110.3"/>
    <property type="gene ID" value="AT1G15110"/>
</dbReference>
<dbReference type="Gramene" id="AT1G15110.4">
    <molecule id="F4HXY7-1"/>
    <property type="protein sequence ID" value="AT1G15110.4"/>
    <property type="gene ID" value="AT1G15110"/>
</dbReference>
<dbReference type="KEGG" id="ath:AT1G15110"/>
<dbReference type="Araport" id="AT1G15110"/>
<dbReference type="TAIR" id="AT1G15110">
    <property type="gene designation" value="PSS1"/>
</dbReference>
<dbReference type="eggNOG" id="KOG2735">
    <property type="taxonomic scope" value="Eukaryota"/>
</dbReference>
<dbReference type="HOGENOM" id="CLU_037661_1_1_1"/>
<dbReference type="InParanoid" id="F4HXY7"/>
<dbReference type="OMA" id="QHVLPNF"/>
<dbReference type="OrthoDB" id="10265393at2759"/>
<dbReference type="BRENDA" id="2.7.8.8">
    <property type="organism ID" value="399"/>
</dbReference>
<dbReference type="UniPathway" id="UPA00558">
    <property type="reaction ID" value="UER00615"/>
</dbReference>
<dbReference type="PRO" id="PR:F4HXY7"/>
<dbReference type="Proteomes" id="UP000006548">
    <property type="component" value="Chromosome 1"/>
</dbReference>
<dbReference type="ExpressionAtlas" id="F4HXY7">
    <property type="expression patterns" value="baseline and differential"/>
</dbReference>
<dbReference type="GO" id="GO:0005789">
    <property type="term" value="C:endoplasmic reticulum membrane"/>
    <property type="evidence" value="ECO:0000314"/>
    <property type="project" value="UniProtKB"/>
</dbReference>
<dbReference type="GO" id="GO:0031965">
    <property type="term" value="C:nuclear membrane"/>
    <property type="evidence" value="ECO:0000314"/>
    <property type="project" value="UniProtKB"/>
</dbReference>
<dbReference type="GO" id="GO:0003882">
    <property type="term" value="F:CDP-diacylglycerol-serine O-phosphatidyltransferase activity"/>
    <property type="evidence" value="ECO:0007669"/>
    <property type="project" value="UniProtKB-EC"/>
</dbReference>
<dbReference type="GO" id="GO:0106245">
    <property type="term" value="F:L-serine-phosphatidylethanolamine phosphatidyltransferase activity"/>
    <property type="evidence" value="ECO:0007669"/>
    <property type="project" value="InterPro"/>
</dbReference>
<dbReference type="GO" id="GO:0009556">
    <property type="term" value="P:microsporogenesis"/>
    <property type="evidence" value="ECO:0000315"/>
    <property type="project" value="UniProtKB"/>
</dbReference>
<dbReference type="GO" id="GO:0006646">
    <property type="term" value="P:phosphatidylethanolamine biosynthetic process"/>
    <property type="evidence" value="ECO:0007669"/>
    <property type="project" value="UniProtKB-UniPathway"/>
</dbReference>
<dbReference type="GO" id="GO:0006659">
    <property type="term" value="P:phosphatidylserine biosynthetic process"/>
    <property type="evidence" value="ECO:0000314"/>
    <property type="project" value="UniProtKB"/>
</dbReference>
<dbReference type="InterPro" id="IPR004277">
    <property type="entry name" value="PSS"/>
</dbReference>
<dbReference type="PANTHER" id="PTHR15362">
    <property type="entry name" value="PHOSPHATIDYLINOSITOL SYNTHASE"/>
    <property type="match status" value="1"/>
</dbReference>
<dbReference type="PANTHER" id="PTHR15362:SF7">
    <property type="entry name" value="PHOSPHATIDYLSERINE SYNTHASE 2"/>
    <property type="match status" value="1"/>
</dbReference>
<dbReference type="Pfam" id="PF03034">
    <property type="entry name" value="PSS"/>
    <property type="match status" value="1"/>
</dbReference>
<name>PSS1_ARATH</name>
<comment type="function">
    <text evidence="3">Catalyzes a base-exchange reaction in which the polar head group of phosphatidylethanolamine (PE) or phosphatidylcholine (PC) is replaced by L-serine. Is essential for phosphatidylserine (PS) biosynthesis and PE seems to be the most plausible substrate. Plays an important role in microspore maturation.</text>
</comment>
<comment type="catalytic activity">
    <reaction evidence="3">
        <text>a CDP-1,2-diacyl-sn-glycerol + L-serine = a 1,2-diacyl-sn-glycero-3-phospho-L-serine + CMP + H(+)</text>
        <dbReference type="Rhea" id="RHEA:16913"/>
        <dbReference type="ChEBI" id="CHEBI:15378"/>
        <dbReference type="ChEBI" id="CHEBI:33384"/>
        <dbReference type="ChEBI" id="CHEBI:57262"/>
        <dbReference type="ChEBI" id="CHEBI:58332"/>
        <dbReference type="ChEBI" id="CHEBI:60377"/>
        <dbReference type="EC" id="2.7.8.8"/>
    </reaction>
</comment>
<comment type="pathway">
    <text>Phospholipid metabolism; phosphatidylethanolamine biosynthesis; phosphatidylethanolamine from CDP-diacylglycerol: step 1/2.</text>
</comment>
<comment type="subcellular location">
    <subcellularLocation>
        <location evidence="3">Endoplasmic reticulum membrane</location>
        <topology evidence="3">Multi-pass membrane protein</topology>
    </subcellularLocation>
    <subcellularLocation>
        <location evidence="3">Nucleus envelope</location>
    </subcellularLocation>
    <text>Mainly localized in nuclei and ER membranes during pollen development.</text>
</comment>
<comment type="alternative products">
    <event type="alternative splicing"/>
    <isoform>
        <id>F4HXY7-1</id>
        <name>1</name>
        <sequence type="displayed"/>
    </isoform>
    <text>A number of isoforms are produced. According to EST sequences.</text>
</comment>
<comment type="tissue specificity">
    <text evidence="3">Expressed in trichomes, leaf veins and root vasculature.</text>
</comment>
<comment type="developmental stage">
    <text>Expressed in anthers and microspores at floral stages 9 to 12, tapetum at floral stages 7 to 11, mature embryos at 5 days after flowering and dry seed embryos.</text>
</comment>
<comment type="disruption phenotype">
    <text evidence="3">Mostly embryonic lethality with low frequencies of dwarf infertile plants.</text>
</comment>
<comment type="similarity">
    <text evidence="4">Belongs to the CDP-alcohol phosphatidyltransferase class-I family.</text>
</comment>
<comment type="sequence caution" evidence="4">
    <conflict type="erroneous gene model prediction">
        <sequence resource="EMBL-CDS" id="AAD39639"/>
    </conflict>
</comment>
<keyword id="KW-0025">Alternative splicing</keyword>
<keyword id="KW-0256">Endoplasmic reticulum</keyword>
<keyword id="KW-0444">Lipid biosynthesis</keyword>
<keyword id="KW-0443">Lipid metabolism</keyword>
<keyword id="KW-0472">Membrane</keyword>
<keyword id="KW-0539">Nucleus</keyword>
<keyword id="KW-0594">Phospholipid biosynthesis</keyword>
<keyword id="KW-1208">Phospholipid metabolism</keyword>
<keyword id="KW-1185">Reference proteome</keyword>
<keyword id="KW-0808">Transferase</keyword>
<keyword id="KW-0812">Transmembrane</keyword>
<keyword id="KW-1133">Transmembrane helix</keyword>
<accession>F4HXY7</accession>
<accession>Q9XI59</accession>
<feature type="chain" id="PRO_0000429526" description="CDP-diacylglycerol--serine O-phosphatidyltransferase 1">
    <location>
        <begin position="1"/>
        <end position="425"/>
    </location>
</feature>
<feature type="transmembrane region" description="Helical" evidence="1">
    <location>
        <begin position="42"/>
        <end position="62"/>
    </location>
</feature>
<feature type="transmembrane region" description="Helical" evidence="1">
    <location>
        <begin position="79"/>
        <end position="99"/>
    </location>
</feature>
<feature type="transmembrane region" description="Helical" evidence="1">
    <location>
        <begin position="105"/>
        <end position="125"/>
    </location>
</feature>
<feature type="transmembrane region" description="Helical" evidence="1">
    <location>
        <begin position="197"/>
        <end position="217"/>
    </location>
</feature>
<feature type="transmembrane region" description="Helical" evidence="1">
    <location>
        <begin position="227"/>
        <end position="247"/>
    </location>
</feature>
<feature type="transmembrane region" description="Helical" evidence="1">
    <location>
        <begin position="296"/>
        <end position="316"/>
    </location>
</feature>
<feature type="transmembrane region" description="Helical" evidence="1">
    <location>
        <begin position="321"/>
        <end position="341"/>
    </location>
</feature>
<feature type="transmembrane region" description="Helical" evidence="1">
    <location>
        <begin position="361"/>
        <end position="381"/>
    </location>
</feature>
<feature type="transmembrane region" description="Helical" evidence="1">
    <location>
        <begin position="390"/>
        <end position="410"/>
    </location>
</feature>
<feature type="region of interest" description="Disordered" evidence="2">
    <location>
        <begin position="1"/>
        <end position="23"/>
    </location>
</feature>
<feature type="compositionally biased region" description="Basic and acidic residues" evidence="2">
    <location>
        <begin position="1"/>
        <end position="16"/>
    </location>
</feature>
<feature type="sequence conflict" description="In Ref. 3; BX813560." evidence="4" ref="3">
    <original>H</original>
    <variation>N</variation>
    <location>
        <position position="281"/>
    </location>
</feature>
<organism>
    <name type="scientific">Arabidopsis thaliana</name>
    <name type="common">Mouse-ear cress</name>
    <dbReference type="NCBI Taxonomy" id="3702"/>
    <lineage>
        <taxon>Eukaryota</taxon>
        <taxon>Viridiplantae</taxon>
        <taxon>Streptophyta</taxon>
        <taxon>Embryophyta</taxon>
        <taxon>Tracheophyta</taxon>
        <taxon>Spermatophyta</taxon>
        <taxon>Magnoliopsida</taxon>
        <taxon>eudicotyledons</taxon>
        <taxon>Gunneridae</taxon>
        <taxon>Pentapetalae</taxon>
        <taxon>rosids</taxon>
        <taxon>malvids</taxon>
        <taxon>Brassicales</taxon>
        <taxon>Brassicaceae</taxon>
        <taxon>Camelineae</taxon>
        <taxon>Arabidopsis</taxon>
    </lineage>
</organism>
<reference key="1">
    <citation type="journal article" date="2000" name="Nature">
        <title>Sequence and analysis of chromosome 1 of the plant Arabidopsis thaliana.</title>
        <authorList>
            <person name="Theologis A."/>
            <person name="Ecker J.R."/>
            <person name="Palm C.J."/>
            <person name="Federspiel N.A."/>
            <person name="Kaul S."/>
            <person name="White O."/>
            <person name="Alonso J."/>
            <person name="Altafi H."/>
            <person name="Araujo R."/>
            <person name="Bowman C.L."/>
            <person name="Brooks S.Y."/>
            <person name="Buehler E."/>
            <person name="Chan A."/>
            <person name="Chao Q."/>
            <person name="Chen H."/>
            <person name="Cheuk R.F."/>
            <person name="Chin C.W."/>
            <person name="Chung M.K."/>
            <person name="Conn L."/>
            <person name="Conway A.B."/>
            <person name="Conway A.R."/>
            <person name="Creasy T.H."/>
            <person name="Dewar K."/>
            <person name="Dunn P."/>
            <person name="Etgu P."/>
            <person name="Feldblyum T.V."/>
            <person name="Feng J.-D."/>
            <person name="Fong B."/>
            <person name="Fujii C.Y."/>
            <person name="Gill J.E."/>
            <person name="Goldsmith A.D."/>
            <person name="Haas B."/>
            <person name="Hansen N.F."/>
            <person name="Hughes B."/>
            <person name="Huizar L."/>
            <person name="Hunter J.L."/>
            <person name="Jenkins J."/>
            <person name="Johnson-Hopson C."/>
            <person name="Khan S."/>
            <person name="Khaykin E."/>
            <person name="Kim C.J."/>
            <person name="Koo H.L."/>
            <person name="Kremenetskaia I."/>
            <person name="Kurtz D.B."/>
            <person name="Kwan A."/>
            <person name="Lam B."/>
            <person name="Langin-Hooper S."/>
            <person name="Lee A."/>
            <person name="Lee J.M."/>
            <person name="Lenz C.A."/>
            <person name="Li J.H."/>
            <person name="Li Y.-P."/>
            <person name="Lin X."/>
            <person name="Liu S.X."/>
            <person name="Liu Z.A."/>
            <person name="Luros J.S."/>
            <person name="Maiti R."/>
            <person name="Marziali A."/>
            <person name="Militscher J."/>
            <person name="Miranda M."/>
            <person name="Nguyen M."/>
            <person name="Nierman W.C."/>
            <person name="Osborne B.I."/>
            <person name="Pai G."/>
            <person name="Peterson J."/>
            <person name="Pham P.K."/>
            <person name="Rizzo M."/>
            <person name="Rooney T."/>
            <person name="Rowley D."/>
            <person name="Sakano H."/>
            <person name="Salzberg S.L."/>
            <person name="Schwartz J.R."/>
            <person name="Shinn P."/>
            <person name="Southwick A.M."/>
            <person name="Sun H."/>
            <person name="Tallon L.J."/>
            <person name="Tambunga G."/>
            <person name="Toriumi M.J."/>
            <person name="Town C.D."/>
            <person name="Utterback T."/>
            <person name="Van Aken S."/>
            <person name="Vaysberg M."/>
            <person name="Vysotskaia V.S."/>
            <person name="Walker M."/>
            <person name="Wu D."/>
            <person name="Yu G."/>
            <person name="Fraser C.M."/>
            <person name="Venter J.C."/>
            <person name="Davis R.W."/>
        </authorList>
    </citation>
    <scope>NUCLEOTIDE SEQUENCE [LARGE SCALE GENOMIC DNA]</scope>
    <source>
        <strain>cv. Columbia</strain>
    </source>
</reference>
<reference key="2">
    <citation type="journal article" date="2017" name="Plant J.">
        <title>Araport11: a complete reannotation of the Arabidopsis thaliana reference genome.</title>
        <authorList>
            <person name="Cheng C.Y."/>
            <person name="Krishnakumar V."/>
            <person name="Chan A.P."/>
            <person name="Thibaud-Nissen F."/>
            <person name="Schobel S."/>
            <person name="Town C.D."/>
        </authorList>
    </citation>
    <scope>GENOME REANNOTATION</scope>
    <source>
        <strain>cv. Columbia</strain>
    </source>
</reference>
<reference key="3">
    <citation type="journal article" date="2004" name="Genome Res.">
        <title>Whole genome sequence comparisons and 'full-length' cDNA sequences: a combined approach to evaluate and improve Arabidopsis genome annotation.</title>
        <authorList>
            <person name="Castelli V."/>
            <person name="Aury J.-M."/>
            <person name="Jaillon O."/>
            <person name="Wincker P."/>
            <person name="Clepet C."/>
            <person name="Menard M."/>
            <person name="Cruaud C."/>
            <person name="Quetier F."/>
            <person name="Scarpelli C."/>
            <person name="Schaechter V."/>
            <person name="Temple G."/>
            <person name="Caboche M."/>
            <person name="Weissenbach J."/>
            <person name="Salanoubat M."/>
        </authorList>
    </citation>
    <scope>NUCLEOTIDE SEQUENCE [LARGE SCALE MRNA]</scope>
    <source>
        <strain>cv. Columbia</strain>
    </source>
</reference>
<reference key="4">
    <citation type="journal article" date="2011" name="Plant J.">
        <title>PHOSPHATIDYLSERINE SYNTHASE1 is required for microspore development in Arabidopsis thaliana.</title>
        <authorList>
            <person name="Yamaoka Y."/>
            <person name="Yu Y."/>
            <person name="Mizoi J."/>
            <person name="Fujiki Y."/>
            <person name="Saito K."/>
            <person name="Nishijima M."/>
            <person name="Lee Y."/>
            <person name="Nishida I."/>
        </authorList>
    </citation>
    <scope>FUNCTION</scope>
    <scope>CATALYTIC ACTIVITY</scope>
    <scope>SUBCELLULAR LOCATION</scope>
    <scope>TISSUE SPECIFICITY</scope>
    <scope>DISRUPTION PHENOTYPE</scope>
</reference>
<gene>
    <name type="primary">PSS1</name>
    <name type="ordered locus">At1g15110</name>
    <name type="ORF">F9L1.4</name>
</gene>
<sequence length="425" mass="49518">MEPNGYRKERRKEQHLGRMNGGGGDVETDLDPWTAWAYKPRTISLLLIGACFLIWASGALDPDSTTSDDLVTSVKRGVWAMIAVFLAYSLLQAPSTVLIRPHPAIWRLVHGMAVIYLVALTFLLFQRRDDARQFMKFLHPDLGIELPEKSYGADCRIYVPDHPTNRFKNLYDTVFDEFFLAHIFGWWGKAILIRNQPLLWVLSIGFELLEVTFRHMLPNFNECWWDSIVLDILICNWFGIWAGMYTVRYFDGKTYEWVGISRQPNIIGKVKRTLGQFTPAHWDKDEWHPLQGPWRFIQVLTLCIIFLTVELNTFFLKFSLWIPPRNPVILYRLILWWLIAIPTTREYNSYLQDRKPVKKVGAFCWLSLGICIVELLICIKFGSGLYPTEMPLWVVTLWGSVGLGLVAFLLSWTWKIQKILAQKRR</sequence>
<proteinExistence type="evidence at protein level"/>
<evidence type="ECO:0000255" key="1"/>
<evidence type="ECO:0000256" key="2">
    <source>
        <dbReference type="SAM" id="MobiDB-lite"/>
    </source>
</evidence>
<evidence type="ECO:0000269" key="3">
    <source>
    </source>
</evidence>
<evidence type="ECO:0000305" key="4"/>